<dbReference type="EMBL" id="D37947">
    <property type="protein sequence ID" value="BAA07165.1"/>
    <property type="molecule type" value="Genomic_DNA"/>
</dbReference>
<dbReference type="PIR" id="JQ1560">
    <property type="entry name" value="JQ1560"/>
</dbReference>
<proteinExistence type="predicted"/>
<feature type="chain" id="PRO_0000133080" description="Uncharacterized 9.7 kDa protein in PE 3'region">
    <location>
        <begin position="1"/>
        <end position="88"/>
    </location>
</feature>
<accession>P36868</accession>
<accession>Q90117</accession>
<reference key="1">
    <citation type="journal article" date="1992" name="J. Gen. Virol.">
        <title>Nucleotide sequence of the polyhedron envelope protein gene region of the Lymantria dispar nuclear polyhedrosis virus.</title>
        <authorList>
            <person name="Bjoernson R.M."/>
            <person name="Rohrmann G.F."/>
        </authorList>
    </citation>
    <scope>NUCLEOTIDE SEQUENCE [GENOMIC DNA]</scope>
</reference>
<reference key="2">
    <citation type="submission" date="1994-09" db="EMBL/GenBank/DDBJ databases">
        <authorList>
            <person name="Rohrmann G.F."/>
        </authorList>
    </citation>
    <scope>SEQUENCE REVISION</scope>
</reference>
<sequence>MINEVCADAALGRHEARRDRELRTLQSQLYEVCRRSGVADSFCSSLMMSPVGVGGATSKPYFKGGVEEDRVQSSLRRNDVLVVPARVP</sequence>
<name>YPE4_NPVLD</name>
<organism>
    <name type="scientific">Lymantria dispar multicapsid nuclear polyhedrosis virus</name>
    <name type="common">LdMNPV</name>
    <dbReference type="NCBI Taxonomy" id="10449"/>
    <lineage>
        <taxon>Viruses</taxon>
        <taxon>Viruses incertae sedis</taxon>
        <taxon>Naldaviricetes</taxon>
        <taxon>Lefavirales</taxon>
        <taxon>Baculoviridae</taxon>
        <taxon>Alphabaculovirus</taxon>
        <taxon>Alphabaculovirus lydisparis</taxon>
    </lineage>
</organism>
<organismHost>
    <name type="scientific">Lepidoptera</name>
    <name type="common">butterflies and moths</name>
    <dbReference type="NCBI Taxonomy" id="7088"/>
</organismHost>
<protein>
    <recommendedName>
        <fullName>Uncharacterized 9.7 kDa protein in PE 3'region</fullName>
    </recommendedName>
    <alternativeName>
        <fullName>ORF 4</fullName>
    </alternativeName>
</protein>